<name>H48_CHICK</name>
<protein>
    <recommendedName>
        <fullName>Histone H4 type VIII</fullName>
    </recommendedName>
</protein>
<organism>
    <name type="scientific">Gallus gallus</name>
    <name type="common">Chicken</name>
    <dbReference type="NCBI Taxonomy" id="9031"/>
    <lineage>
        <taxon>Eukaryota</taxon>
        <taxon>Metazoa</taxon>
        <taxon>Chordata</taxon>
        <taxon>Craniata</taxon>
        <taxon>Vertebrata</taxon>
        <taxon>Euteleostomi</taxon>
        <taxon>Archelosauria</taxon>
        <taxon>Archosauria</taxon>
        <taxon>Dinosauria</taxon>
        <taxon>Saurischia</taxon>
        <taxon>Theropoda</taxon>
        <taxon>Coelurosauria</taxon>
        <taxon>Aves</taxon>
        <taxon>Neognathae</taxon>
        <taxon>Galloanserae</taxon>
        <taxon>Galliformes</taxon>
        <taxon>Phasianidae</taxon>
        <taxon>Phasianinae</taxon>
        <taxon>Gallus</taxon>
    </lineage>
</organism>
<comment type="function">
    <text>Core component of nucleosome. Nucleosomes wrap and compact DNA into chromatin, limiting DNA accessibility to the cellular machineries which require DNA as a template. Histones thereby play a central role in transcription regulation, DNA repair, DNA replication and chromosomal stability. DNA accessibility is regulated via a complex set of post-translational modifications of histones, also called histone code, and nucleosome remodeling.</text>
</comment>
<comment type="subunit">
    <text>The nucleosome is a histone octamer containing two molecules each of H2A, H2B, H3 and H4 assembled in one H3-H4 heterotetramer and two H2A-H2B heterodimers. The octamer wraps approximately 147 bp of DNA.</text>
</comment>
<comment type="subcellular location">
    <subcellularLocation>
        <location evidence="1">Nucleus</location>
    </subcellularLocation>
    <subcellularLocation>
        <location evidence="1">Chromosome</location>
    </subcellularLocation>
</comment>
<comment type="PTM">
    <text evidence="2">Acetylation at Lys-6 (H4K5ac), Lys-9 (H4K8ac), Lys-13 (H4K12ac) and Lys-17 (H4K16ac) occurs in coding regions of the genome but not in heterochromatin.</text>
</comment>
<comment type="PTM">
    <text evidence="2">Citrullination at Arg-4 (H4R3ci) by PADI4 impairs methylation.</text>
</comment>
<comment type="PTM">
    <text evidence="2">Monomethylation and asymmetric dimethylation at Arg-4 (H4R3me1 and H4R3me2a, respectively) by PRMT1 favors acetylation at Lys-9 (H4K8ac) and Lys-13 (H4K12ac). Demethylation is performed by JMJD6. Symmetric dimethylation on Arg-4 (H4R3me2s) by the PRDM1/PRMT5 complex may play a crucial role in the germ-cell lineage (By similarity).</text>
</comment>
<comment type="PTM">
    <text evidence="2">Monomethylated, dimethylated or trimethylated at Lys-21 (H4K20me1, H4K20me2, H4K20me3). Monomethylation is performed by KMT5A/SET8. Trimethylation is performed by KMT5B and KMT5C and induces gene silencing. Monomethylated at Lys-13 (H4K12me1) by N6AMT1; H4K12me1 modification is present at the promoters of numerous genes encoding cell cycle regulators.</text>
</comment>
<comment type="PTM">
    <text evidence="2">Acetyl-methylated at Lys-6 and Lys-13 (H4K5acme and H4K12acme, respectively), acetyl-methylation is an epigenetic mark of active chromatin associated with increased transcriptional initiation. Acetyl-methylation is formed by acetylation by EP300/p300 of lysine residues that are already monomethylated on the same side chain. H4K5acme and H4K12acme marks specifically bind BRD2.</text>
</comment>
<comment type="PTM">
    <text evidence="2">Ubiquitinated by the CUL4-DDB-RBX1 complex in response to ultraviolet irradiation. This may weaken the interaction between histones and DNA and facilitate DNA accessibility to repair proteins. Monoubiquitinated at Lys-92 of histone H4 (H4K91ub1) in response to DNA damage. The exact role of H4K91ub1 in DNA damage response is still unclear but it may function as a licensing signal for additional histone H4 post-translational modifications such as H4 Lys-21 methylation (H4K20me) (By similarity).</text>
</comment>
<comment type="PTM">
    <text evidence="2">Sumoylated, which is associated with transcriptional repression.</text>
</comment>
<comment type="PTM">
    <text evidence="3">Butyrylation of histones marks active promoters and competes with histone acetylation.</text>
</comment>
<comment type="PTM">
    <text evidence="2">Glutarylation at Lys-92 (H4K91glu) destabilizes nucleosomes by promoting dissociation of the H2A-H2B dimers from nucleosomes.</text>
</comment>
<comment type="PTM">
    <text evidence="2">Ufmylated; monofmylated by UFL1 at Lys-32 (H4K31Ufm1) in response to DNA damage.</text>
</comment>
<comment type="PTM">
    <text evidence="2">Lactylated in macrophages by EP300/P300 by using lactoyl-CoA directly derived from endogenous or exogenous lactate, leading to stimulates gene transcription. Delactylated by SIRT3 at Lys-17 (H4K16la).</text>
</comment>
<comment type="similarity">
    <text evidence="5">Belongs to the histone H4 family.</text>
</comment>
<evidence type="ECO:0000250" key="1"/>
<evidence type="ECO:0000250" key="2">
    <source>
        <dbReference type="UniProtKB" id="P62805"/>
    </source>
</evidence>
<evidence type="ECO:0000250" key="3">
    <source>
        <dbReference type="UniProtKB" id="P62806"/>
    </source>
</evidence>
<evidence type="ECO:0000256" key="4">
    <source>
        <dbReference type="SAM" id="MobiDB-lite"/>
    </source>
</evidence>
<evidence type="ECO:0000305" key="5"/>
<reference key="1">
    <citation type="journal article" date="1996" name="DNA Res.">
        <title>Organization of the chicken histone genes in a major gene cluster and generation of an almost complete set of the core histone protein sequences.</title>
        <authorList>
            <person name="Takami Y."/>
            <person name="Higashio M."/>
            <person name="Fukuoka T."/>
            <person name="Takechi S."/>
            <person name="Nakayama T."/>
        </authorList>
    </citation>
    <scope>NUCLEOTIDE SEQUENCE [GENOMIC DNA]</scope>
    <source>
        <strain>White leghorn</strain>
        <tissue>Liver</tissue>
    </source>
</reference>
<gene>
    <name type="primary">H4-VIII</name>
</gene>
<proteinExistence type="inferred from homology"/>
<accession>P70081</accession>
<dbReference type="EMBL" id="U37576">
    <property type="protein sequence ID" value="AAC60002.1"/>
    <property type="molecule type" value="Genomic_DNA"/>
</dbReference>
<dbReference type="PIR" id="B61321">
    <property type="entry name" value="B61321"/>
</dbReference>
<dbReference type="SMR" id="P70081"/>
<dbReference type="FunCoup" id="P70081">
    <property type="interactions" value="172"/>
</dbReference>
<dbReference type="VEuPathDB" id="HostDB:geneid_100858049"/>
<dbReference type="InParanoid" id="P70081"/>
<dbReference type="Proteomes" id="UP000000539">
    <property type="component" value="Unassembled WGS sequence"/>
</dbReference>
<dbReference type="GO" id="GO:0000786">
    <property type="term" value="C:nucleosome"/>
    <property type="evidence" value="ECO:0007669"/>
    <property type="project" value="UniProtKB-KW"/>
</dbReference>
<dbReference type="GO" id="GO:0005634">
    <property type="term" value="C:nucleus"/>
    <property type="evidence" value="ECO:0007669"/>
    <property type="project" value="UniProtKB-SubCell"/>
</dbReference>
<dbReference type="GO" id="GO:0003677">
    <property type="term" value="F:DNA binding"/>
    <property type="evidence" value="ECO:0000318"/>
    <property type="project" value="GO_Central"/>
</dbReference>
<dbReference type="GO" id="GO:0046982">
    <property type="term" value="F:protein heterodimerization activity"/>
    <property type="evidence" value="ECO:0007669"/>
    <property type="project" value="InterPro"/>
</dbReference>
<dbReference type="GO" id="GO:0030527">
    <property type="term" value="F:structural constituent of chromatin"/>
    <property type="evidence" value="ECO:0007669"/>
    <property type="project" value="InterPro"/>
</dbReference>
<dbReference type="GO" id="GO:0006334">
    <property type="term" value="P:nucleosome assembly"/>
    <property type="evidence" value="ECO:0000318"/>
    <property type="project" value="GO_Central"/>
</dbReference>
<dbReference type="CDD" id="cd22912">
    <property type="entry name" value="HFD_H4"/>
    <property type="match status" value="1"/>
</dbReference>
<dbReference type="FunFam" id="1.10.20.10:FF:000002">
    <property type="entry name" value="Histone H4"/>
    <property type="match status" value="1"/>
</dbReference>
<dbReference type="Gene3D" id="1.10.20.10">
    <property type="entry name" value="Histone, subunit A"/>
    <property type="match status" value="1"/>
</dbReference>
<dbReference type="InterPro" id="IPR035425">
    <property type="entry name" value="CENP-T/H4_C"/>
</dbReference>
<dbReference type="InterPro" id="IPR009072">
    <property type="entry name" value="Histone-fold"/>
</dbReference>
<dbReference type="InterPro" id="IPR001951">
    <property type="entry name" value="Histone_H4"/>
</dbReference>
<dbReference type="InterPro" id="IPR019809">
    <property type="entry name" value="Histone_H4_CS"/>
</dbReference>
<dbReference type="InterPro" id="IPR004823">
    <property type="entry name" value="TAF_TATA-bd_Histone-like_dom"/>
</dbReference>
<dbReference type="PANTHER" id="PTHR10484">
    <property type="entry name" value="HISTONE H4"/>
    <property type="match status" value="1"/>
</dbReference>
<dbReference type="Pfam" id="PF15511">
    <property type="entry name" value="CENP-T_C"/>
    <property type="match status" value="1"/>
</dbReference>
<dbReference type="PRINTS" id="PR00623">
    <property type="entry name" value="HISTONEH4"/>
</dbReference>
<dbReference type="SMART" id="SM00417">
    <property type="entry name" value="H4"/>
    <property type="match status" value="1"/>
</dbReference>
<dbReference type="SMART" id="SM00803">
    <property type="entry name" value="TAF"/>
    <property type="match status" value="1"/>
</dbReference>
<dbReference type="SUPFAM" id="SSF47113">
    <property type="entry name" value="Histone-fold"/>
    <property type="match status" value="1"/>
</dbReference>
<dbReference type="PROSITE" id="PS00047">
    <property type="entry name" value="HISTONE_H4"/>
    <property type="match status" value="1"/>
</dbReference>
<keyword id="KW-0007">Acetylation</keyword>
<keyword id="KW-0158">Chromosome</keyword>
<keyword id="KW-0164">Citrullination</keyword>
<keyword id="KW-0238">DNA-binding</keyword>
<keyword id="KW-0379">Hydroxylation</keyword>
<keyword id="KW-1017">Isopeptide bond</keyword>
<keyword id="KW-0488">Methylation</keyword>
<keyword id="KW-0544">Nucleosome core</keyword>
<keyword id="KW-0539">Nucleus</keyword>
<keyword id="KW-0597">Phosphoprotein</keyword>
<keyword id="KW-1185">Reference proteome</keyword>
<keyword id="KW-0832">Ubl conjugation</keyword>
<feature type="initiator methionine" description="Removed" evidence="1">
    <location>
        <position position="1"/>
    </location>
</feature>
<feature type="chain" id="PRO_0000158297" description="Histone H4 type VIII">
    <location>
        <begin position="2"/>
        <end position="103"/>
    </location>
</feature>
<feature type="region of interest" description="Disordered" evidence="4">
    <location>
        <begin position="1"/>
        <end position="20"/>
    </location>
</feature>
<feature type="compositionally biased region" description="Gly residues" evidence="4">
    <location>
        <begin position="1"/>
        <end position="14"/>
    </location>
</feature>
<feature type="modified residue" description="N-acetylserine" evidence="2">
    <location>
        <position position="2"/>
    </location>
</feature>
<feature type="modified residue" description="Phosphoserine" evidence="2">
    <location>
        <position position="2"/>
    </location>
</feature>
<feature type="modified residue" description="Asymmetric dimethylarginine; by PRMT1; alternate" evidence="2">
    <location>
        <position position="4"/>
    </location>
</feature>
<feature type="modified residue" description="Citrulline; alternate" evidence="2">
    <location>
        <position position="4"/>
    </location>
</feature>
<feature type="modified residue" description="Omega-N-methylarginine; by PRMT1; alternate" evidence="2">
    <location>
        <position position="4"/>
    </location>
</feature>
<feature type="modified residue" description="Symmetric dimethylarginine; by PRMT5 and PRMT7; alternate" evidence="2">
    <location>
        <position position="4"/>
    </location>
</feature>
<feature type="modified residue" description="N6-(2-hydroxyisobutyryl)lysine; alternate" evidence="2">
    <location>
        <position position="6"/>
    </location>
</feature>
<feature type="modified residue" description="N6-acetyl-N6-methyllysine; alternate" evidence="2">
    <location>
        <position position="6"/>
    </location>
</feature>
<feature type="modified residue" description="N6-acetyllysine" evidence="2">
    <location>
        <position position="6"/>
    </location>
</feature>
<feature type="modified residue" description="N6-butyryllysine; alternate" evidence="2">
    <location>
        <position position="6"/>
    </location>
</feature>
<feature type="modified residue" description="N6-glutaryllysine; alternate" evidence="2">
    <location>
        <position position="6"/>
    </location>
</feature>
<feature type="modified residue" description="N6-lactoyllysine; alternate" evidence="2">
    <location>
        <position position="6"/>
    </location>
</feature>
<feature type="modified residue" description="N6-(2-hydroxyisobutyryl)lysine; alternate" evidence="2">
    <location>
        <position position="9"/>
    </location>
</feature>
<feature type="modified residue" description="N6-acetyllysine" evidence="2">
    <location>
        <position position="9"/>
    </location>
</feature>
<feature type="modified residue" description="N6-butyryllysine; alternate" evidence="2">
    <location>
        <position position="9"/>
    </location>
</feature>
<feature type="modified residue" description="N6-lactoyllysine; alternate" evidence="2">
    <location>
        <position position="9"/>
    </location>
</feature>
<feature type="modified residue" description="N6-propionyllysine; alternate" evidence="2">
    <location>
        <position position="9"/>
    </location>
</feature>
<feature type="modified residue" description="N6-(2-hydroxyisobutyryl)lysine; alternate" evidence="2">
    <location>
        <position position="13"/>
    </location>
</feature>
<feature type="modified residue" description="N6-acetyl-N6-methyllysine; alternate" evidence="2">
    <location>
        <position position="13"/>
    </location>
</feature>
<feature type="modified residue" description="N6-acetyllysine" evidence="2">
    <location>
        <position position="13"/>
    </location>
</feature>
<feature type="modified residue" description="N6-butyryllysine; alternate" evidence="2">
    <location>
        <position position="13"/>
    </location>
</feature>
<feature type="modified residue" description="N6-glutaryllysine; alternate" evidence="2">
    <location>
        <position position="13"/>
    </location>
</feature>
<feature type="modified residue" description="N6-lactoyllysine; alternate" evidence="2">
    <location>
        <position position="13"/>
    </location>
</feature>
<feature type="modified residue" description="N6-methyllysine; alternate" evidence="2">
    <location>
        <position position="13"/>
    </location>
</feature>
<feature type="modified residue" description="N6-(2-hydroxyisobutyryl)lysine; alternate" evidence="2">
    <location>
        <position position="17"/>
    </location>
</feature>
<feature type="modified residue" description="N6-acetyllysine" evidence="2">
    <location>
        <position position="17"/>
    </location>
</feature>
<feature type="modified residue" description="N6-butyryllysine; alternate" evidence="2">
    <location>
        <position position="17"/>
    </location>
</feature>
<feature type="modified residue" description="N6-lactoyllysine; alternate" evidence="2">
    <location>
        <position position="17"/>
    </location>
</feature>
<feature type="modified residue" description="N6-propionyllysine; alternate" evidence="2">
    <location>
        <position position="17"/>
    </location>
</feature>
<feature type="modified residue" description="N6,N6,N6-trimethyllysine; alternate" evidence="2">
    <location>
        <position position="21"/>
    </location>
</feature>
<feature type="modified residue" description="N6,N6-dimethyllysine; alternate" evidence="2">
    <location>
        <position position="21"/>
    </location>
</feature>
<feature type="modified residue" description="N6-methyllysine; alternate" evidence="2">
    <location>
        <position position="21"/>
    </location>
</feature>
<feature type="modified residue" description="N6-(2-hydroxyisobutyryl)lysine; alternate" evidence="2">
    <location>
        <position position="32"/>
    </location>
</feature>
<feature type="modified residue" description="N6-acetyllysine" evidence="2">
    <location>
        <position position="32"/>
    </location>
</feature>
<feature type="modified residue" description="N6-butyryllysine; alternate" evidence="2">
    <location>
        <position position="32"/>
    </location>
</feature>
<feature type="modified residue" description="N6-glutaryllysine; alternate" evidence="2">
    <location>
        <position position="32"/>
    </location>
</feature>
<feature type="modified residue" description="N6-lactoyllysine; alternate" evidence="2">
    <location>
        <position position="32"/>
    </location>
</feature>
<feature type="modified residue" description="N6-propionyllysine; alternate" evidence="2">
    <location>
        <position position="32"/>
    </location>
</feature>
<feature type="modified residue" description="N6-succinyllysine; alternate" evidence="2">
    <location>
        <position position="32"/>
    </location>
</feature>
<feature type="modified residue" description="N6-(2-hydroxyisobutyryl)lysine; alternate" evidence="2">
    <location>
        <position position="45"/>
    </location>
</feature>
<feature type="modified residue" description="N6-butyryllysine; alternate" evidence="2">
    <location>
        <position position="45"/>
    </location>
</feature>
<feature type="modified residue" description="N6-propionyllysine; alternate" evidence="2">
    <location>
        <position position="45"/>
    </location>
</feature>
<feature type="modified residue" description="Phosphoserine" evidence="2">
    <location>
        <position position="48"/>
    </location>
</feature>
<feature type="modified residue" description="Phosphotyrosine" evidence="2">
    <location>
        <position position="52"/>
    </location>
</feature>
<feature type="modified residue" description="N6-(2-hydroxyisobutyryl)lysine" evidence="2">
    <location>
        <position position="60"/>
    </location>
</feature>
<feature type="modified residue" description="N6-acetyllysine" evidence="2">
    <location>
        <position position="60"/>
    </location>
</feature>
<feature type="modified residue" description="N6-glutaryllysine; alternate" evidence="2">
    <location>
        <position position="60"/>
    </location>
</feature>
<feature type="modified residue" description="N6-(2-hydroxyisobutyryl)lysine; alternate" evidence="2">
    <location>
        <position position="78"/>
    </location>
</feature>
<feature type="modified residue" description="N6-butyryllysine; alternate" evidence="2">
    <location>
        <position position="78"/>
    </location>
</feature>
<feature type="modified residue" description="N6-glutaryllysine; alternate" evidence="2">
    <location>
        <position position="78"/>
    </location>
</feature>
<feature type="modified residue" description="N6-lactoyllysine; alternate" evidence="2">
    <location>
        <position position="78"/>
    </location>
</feature>
<feature type="modified residue" description="N6-propionyllysine; alternate" evidence="2">
    <location>
        <position position="78"/>
    </location>
</feature>
<feature type="modified residue" description="N6-succinyllysine" evidence="2">
    <location>
        <position position="78"/>
    </location>
</feature>
<feature type="modified residue" description="N6-(2-hydroxyisobutyryl)lysine; alternate" evidence="2">
    <location>
        <position position="80"/>
    </location>
</feature>
<feature type="modified residue" description="N6-acetyllysine" evidence="2">
    <location>
        <position position="80"/>
    </location>
</feature>
<feature type="modified residue" description="N6-butyryllysine; alternate" evidence="2">
    <location>
        <position position="80"/>
    </location>
</feature>
<feature type="modified residue" description="N6-glutaryllysine; alternate" evidence="2">
    <location>
        <position position="80"/>
    </location>
</feature>
<feature type="modified residue" description="N6-propionyllysine; alternate" evidence="2">
    <location>
        <position position="80"/>
    </location>
</feature>
<feature type="modified residue" description="Phosphotyrosine" evidence="2">
    <location>
        <position position="89"/>
    </location>
</feature>
<feature type="modified residue" description="N6-(2-hydroxyisobutyryl)lysine; alternate" evidence="2">
    <location>
        <position position="92"/>
    </location>
</feature>
<feature type="modified residue" description="N6-acetyllysine; alternate" evidence="2">
    <location>
        <position position="92"/>
    </location>
</feature>
<feature type="modified residue" description="N6-butyryllysine; alternate" evidence="2">
    <location>
        <position position="92"/>
    </location>
</feature>
<feature type="modified residue" description="N6-glutaryllysine; alternate" evidence="2">
    <location>
        <position position="92"/>
    </location>
</feature>
<feature type="modified residue" description="N6-lactoyllysine; alternate" evidence="2">
    <location>
        <position position="92"/>
    </location>
</feature>
<feature type="modified residue" description="N6-propionyllysine; alternate" evidence="2">
    <location>
        <position position="92"/>
    </location>
</feature>
<feature type="modified residue" description="N6-succinyllysine; alternate" evidence="2">
    <location>
        <position position="92"/>
    </location>
</feature>
<feature type="cross-link" description="Glycyl lysine isopeptide (Lys-Gly) (interchain with G-Cter in UFM1); alternate" evidence="2">
    <location>
        <position position="32"/>
    </location>
</feature>
<feature type="cross-link" description="Glycyl lysine isopeptide (Lys-Gly) (interchain with G-Cter in ubiquitin); alternate" evidence="2">
    <location>
        <position position="92"/>
    </location>
</feature>
<sequence length="103" mass="11439">MSGRGKGGKGLGKGGAKRHRKVLRDNIQGITKPAIRRLARRGGVKRISGLIYEETRGVLKVFLENVIRDAVTYTEHAKRKTVTAMDVVYALKRQERTLYGFGG</sequence>